<name>PLSB_ECO55</name>
<accession>B7LAY9</accession>
<dbReference type="EC" id="2.3.1.15" evidence="1"/>
<dbReference type="EMBL" id="CU928145">
    <property type="protein sequence ID" value="CAV01325.1"/>
    <property type="molecule type" value="Genomic_DNA"/>
</dbReference>
<dbReference type="RefSeq" id="WP_000017354.1">
    <property type="nucleotide sequence ID" value="NC_011748.1"/>
</dbReference>
<dbReference type="SMR" id="B7LAY9"/>
<dbReference type="GeneID" id="75204185"/>
<dbReference type="KEGG" id="eck:EC55989_4533"/>
<dbReference type="HOGENOM" id="CLU_015407_0_0_6"/>
<dbReference type="UniPathway" id="UPA00557">
    <property type="reaction ID" value="UER00612"/>
</dbReference>
<dbReference type="Proteomes" id="UP000000746">
    <property type="component" value="Chromosome"/>
</dbReference>
<dbReference type="GO" id="GO:0005886">
    <property type="term" value="C:plasma membrane"/>
    <property type="evidence" value="ECO:0007669"/>
    <property type="project" value="UniProtKB-SubCell"/>
</dbReference>
<dbReference type="GO" id="GO:0004366">
    <property type="term" value="F:glycerol-3-phosphate O-acyltransferase activity"/>
    <property type="evidence" value="ECO:0007669"/>
    <property type="project" value="UniProtKB-UniRule"/>
</dbReference>
<dbReference type="GO" id="GO:0016024">
    <property type="term" value="P:CDP-diacylglycerol biosynthetic process"/>
    <property type="evidence" value="ECO:0007669"/>
    <property type="project" value="UniProtKB-UniRule"/>
</dbReference>
<dbReference type="GO" id="GO:0006631">
    <property type="term" value="P:fatty acid metabolic process"/>
    <property type="evidence" value="ECO:0007669"/>
    <property type="project" value="TreeGrafter"/>
</dbReference>
<dbReference type="CDD" id="cd07993">
    <property type="entry name" value="LPLAT_DHAPAT-like"/>
    <property type="match status" value="1"/>
</dbReference>
<dbReference type="HAMAP" id="MF_00393">
    <property type="entry name" value="Glyc3P_acyltrans"/>
    <property type="match status" value="1"/>
</dbReference>
<dbReference type="InterPro" id="IPR022284">
    <property type="entry name" value="GPAT/DHAPAT"/>
</dbReference>
<dbReference type="InterPro" id="IPR045520">
    <property type="entry name" value="GPAT/DHAPAT_C"/>
</dbReference>
<dbReference type="InterPro" id="IPR041728">
    <property type="entry name" value="GPAT/DHAPAT_LPLAT"/>
</dbReference>
<dbReference type="InterPro" id="IPR028354">
    <property type="entry name" value="GPAT_PlsB"/>
</dbReference>
<dbReference type="InterPro" id="IPR002123">
    <property type="entry name" value="Plipid/glycerol_acylTrfase"/>
</dbReference>
<dbReference type="NCBIfam" id="TIGR03703">
    <property type="entry name" value="plsB"/>
    <property type="match status" value="1"/>
</dbReference>
<dbReference type="NCBIfam" id="NF003441">
    <property type="entry name" value="PRK04974.1"/>
    <property type="match status" value="1"/>
</dbReference>
<dbReference type="PANTHER" id="PTHR12563:SF17">
    <property type="entry name" value="DIHYDROXYACETONE PHOSPHATE ACYLTRANSFERASE"/>
    <property type="match status" value="1"/>
</dbReference>
<dbReference type="PANTHER" id="PTHR12563">
    <property type="entry name" value="GLYCEROL-3-PHOSPHATE ACYLTRANSFERASE"/>
    <property type="match status" value="1"/>
</dbReference>
<dbReference type="Pfam" id="PF01553">
    <property type="entry name" value="Acyltransferase"/>
    <property type="match status" value="1"/>
</dbReference>
<dbReference type="Pfam" id="PF19277">
    <property type="entry name" value="GPAT_C"/>
    <property type="match status" value="1"/>
</dbReference>
<dbReference type="PIRSF" id="PIRSF500064">
    <property type="entry name" value="GPAT"/>
    <property type="match status" value="1"/>
</dbReference>
<dbReference type="PIRSF" id="PIRSF000437">
    <property type="entry name" value="GPAT_DHAPAT"/>
    <property type="match status" value="1"/>
</dbReference>
<dbReference type="SMART" id="SM00563">
    <property type="entry name" value="PlsC"/>
    <property type="match status" value="1"/>
</dbReference>
<dbReference type="SUPFAM" id="SSF69593">
    <property type="entry name" value="Glycerol-3-phosphate (1)-acyltransferase"/>
    <property type="match status" value="1"/>
</dbReference>
<gene>
    <name evidence="1" type="primary">plsB</name>
    <name type="ordered locus">EC55989_4533</name>
</gene>
<organism>
    <name type="scientific">Escherichia coli (strain 55989 / EAEC)</name>
    <dbReference type="NCBI Taxonomy" id="585055"/>
    <lineage>
        <taxon>Bacteria</taxon>
        <taxon>Pseudomonadati</taxon>
        <taxon>Pseudomonadota</taxon>
        <taxon>Gammaproteobacteria</taxon>
        <taxon>Enterobacterales</taxon>
        <taxon>Enterobacteriaceae</taxon>
        <taxon>Escherichia</taxon>
    </lineage>
</organism>
<feature type="chain" id="PRO_1000192402" description="Glycerol-3-phosphate acyltransferase">
    <location>
        <begin position="1"/>
        <end position="807"/>
    </location>
</feature>
<feature type="short sequence motif" description="HXXXXD motif">
    <location>
        <begin position="305"/>
        <end position="310"/>
    </location>
</feature>
<reference key="1">
    <citation type="journal article" date="2009" name="PLoS Genet.">
        <title>Organised genome dynamics in the Escherichia coli species results in highly diverse adaptive paths.</title>
        <authorList>
            <person name="Touchon M."/>
            <person name="Hoede C."/>
            <person name="Tenaillon O."/>
            <person name="Barbe V."/>
            <person name="Baeriswyl S."/>
            <person name="Bidet P."/>
            <person name="Bingen E."/>
            <person name="Bonacorsi S."/>
            <person name="Bouchier C."/>
            <person name="Bouvet O."/>
            <person name="Calteau A."/>
            <person name="Chiapello H."/>
            <person name="Clermont O."/>
            <person name="Cruveiller S."/>
            <person name="Danchin A."/>
            <person name="Diard M."/>
            <person name="Dossat C."/>
            <person name="Karoui M.E."/>
            <person name="Frapy E."/>
            <person name="Garry L."/>
            <person name="Ghigo J.M."/>
            <person name="Gilles A.M."/>
            <person name="Johnson J."/>
            <person name="Le Bouguenec C."/>
            <person name="Lescat M."/>
            <person name="Mangenot S."/>
            <person name="Martinez-Jehanne V."/>
            <person name="Matic I."/>
            <person name="Nassif X."/>
            <person name="Oztas S."/>
            <person name="Petit M.A."/>
            <person name="Pichon C."/>
            <person name="Rouy Z."/>
            <person name="Ruf C.S."/>
            <person name="Schneider D."/>
            <person name="Tourret J."/>
            <person name="Vacherie B."/>
            <person name="Vallenet D."/>
            <person name="Medigue C."/>
            <person name="Rocha E.P.C."/>
            <person name="Denamur E."/>
        </authorList>
    </citation>
    <scope>NUCLEOTIDE SEQUENCE [LARGE SCALE GENOMIC DNA]</scope>
    <source>
        <strain>55989 / EAEC</strain>
    </source>
</reference>
<keyword id="KW-0012">Acyltransferase</keyword>
<keyword id="KW-0997">Cell inner membrane</keyword>
<keyword id="KW-1003">Cell membrane</keyword>
<keyword id="KW-0444">Lipid biosynthesis</keyword>
<keyword id="KW-0443">Lipid metabolism</keyword>
<keyword id="KW-0472">Membrane</keyword>
<keyword id="KW-0594">Phospholipid biosynthesis</keyword>
<keyword id="KW-1208">Phospholipid metabolism</keyword>
<keyword id="KW-1185">Reference proteome</keyword>
<keyword id="KW-0808">Transferase</keyword>
<comment type="catalytic activity">
    <reaction evidence="1">
        <text>sn-glycerol 3-phosphate + an acyl-CoA = a 1-acyl-sn-glycero-3-phosphate + CoA</text>
        <dbReference type="Rhea" id="RHEA:15325"/>
        <dbReference type="ChEBI" id="CHEBI:57287"/>
        <dbReference type="ChEBI" id="CHEBI:57597"/>
        <dbReference type="ChEBI" id="CHEBI:57970"/>
        <dbReference type="ChEBI" id="CHEBI:58342"/>
        <dbReference type="EC" id="2.3.1.15"/>
    </reaction>
</comment>
<comment type="pathway">
    <text evidence="1">Phospholipid metabolism; CDP-diacylglycerol biosynthesis; CDP-diacylglycerol from sn-glycerol 3-phosphate: step 1/3.</text>
</comment>
<comment type="subcellular location">
    <subcellularLocation>
        <location evidence="1">Cell inner membrane</location>
        <topology evidence="1">Peripheral membrane protein</topology>
        <orientation evidence="1">Cytoplasmic side</orientation>
    </subcellularLocation>
</comment>
<comment type="domain">
    <text evidence="1">The HXXXXD motif is essential for acyltransferase activity and may constitute the binding site for the phosphate moiety of the glycerol-3-phosphate.</text>
</comment>
<comment type="similarity">
    <text evidence="1">Belongs to the GPAT/DAPAT family.</text>
</comment>
<sequence length="807" mass="91381">MSGWPRIYYKLLNLPLSILVKSKSIPADPAPELGLDTSRPIMYVLPYNSKADLLTLRAQCLAHDLPDPLEPLEIDGTLLPRYVFIHGGPRVFTYYTPKEESIKLFHDYLDLHRSNPNLDVQMVPVSVMFGRAPGREKGEVNPPLRMLNGVQKFFAVLWLGRDSFVRFSPSVSLRRMADEHGTDKTIAQKLARVARMHFARQRLAAVGPRLPARQDLFNKLLASRAIAKAVEDEARSKKISHEKAQQNAIALMEEIAANFSYEMIRLTDRILGFTWNRLYQGINVHNAERVRQLAHDGHELVYVPCHRSHMDYLLLSYVLYHQGLVPPHIAAGINLNFWPAGPIFRRLGAFFIRRTFKGNKLYSTVFREYLGELFSRGYSVEYFVEGGRSRTGRLLDPKTGTLSMTIQAMLRGGTRPITLIPIYIGYEHVMEVGTYAKELRGATKEKESLPQMLRGLSKLRNLGQGYVNFGEPMPLMTYLNQHVPDWRESIDPIEAVRPAWLTPTVNNIAADLMVRINNAGAANAMNLCCTALLASRQRSLTREQLTEQLNCYLDLMRNVPYSTDSTVPSASASELIDHALQMNKFEVEKDTIGDIIILPREQAVLMTYYRNNIAHMLVLPSLMAAIVTQHRHISRDVLMEHVNVLYPMLKAELFLRWDRDELPDVIDALANEMQRQGLITLQDDELHINPAHSRTLQLLAAGARETLQRYAITFWLLSANPSINRGTLEKESRTVAQRLSVLHGINAPEFFDKAVFSSLVLTLRDEGYISDSGDAEPAETMKVYQLLAELITSDVRLTIESATQGEG</sequence>
<evidence type="ECO:0000255" key="1">
    <source>
        <dbReference type="HAMAP-Rule" id="MF_00393"/>
    </source>
</evidence>
<protein>
    <recommendedName>
        <fullName evidence="1">Glycerol-3-phosphate acyltransferase</fullName>
        <shortName evidence="1">GPAT</shortName>
        <ecNumber evidence="1">2.3.1.15</ecNumber>
    </recommendedName>
</protein>
<proteinExistence type="inferred from homology"/>